<accession>P0DML6</accession>
<evidence type="ECO:0000250" key="1"/>
<evidence type="ECO:0000250" key="2">
    <source>
        <dbReference type="UniProtKB" id="P55057"/>
    </source>
</evidence>
<evidence type="ECO:0000305" key="3"/>
<organism>
    <name type="scientific">Tursiops truncatus</name>
    <name type="common">Atlantic bottle-nosed dolphin</name>
    <name type="synonym">Delphinus truncatus</name>
    <dbReference type="NCBI Taxonomy" id="9739"/>
    <lineage>
        <taxon>Eukaryota</taxon>
        <taxon>Metazoa</taxon>
        <taxon>Chordata</taxon>
        <taxon>Craniata</taxon>
        <taxon>Vertebrata</taxon>
        <taxon>Euteleostomi</taxon>
        <taxon>Mammalia</taxon>
        <taxon>Eutheria</taxon>
        <taxon>Laurasiatheria</taxon>
        <taxon>Artiodactyla</taxon>
        <taxon>Whippomorpha</taxon>
        <taxon>Cetacea</taxon>
        <taxon>Odontoceti</taxon>
        <taxon>Delphinidae</taxon>
        <taxon>Tursiops</taxon>
    </lineage>
</organism>
<gene>
    <name type="primary">APOC4</name>
</gene>
<reference key="1">
    <citation type="journal article" date="2011" name="Nature">
        <title>A high-resolution map of human evolutionary constraint using 29 mammals.</title>
        <authorList>
            <person name="Lindblad-Toh K."/>
            <person name="Garber M."/>
            <person name="Zuk O."/>
            <person name="Lin M.F."/>
            <person name="Parker B.J."/>
            <person name="Washietl S."/>
            <person name="Kheradpour P."/>
            <person name="Ernst J."/>
            <person name="Jordan G."/>
            <person name="Mauceli E."/>
            <person name="Ward L.D."/>
            <person name="Lowe C.B."/>
            <person name="Holloway A.K."/>
            <person name="Clamp M."/>
            <person name="Gnerre S."/>
            <person name="Alfoldi J."/>
            <person name="Beal K."/>
            <person name="Chang J."/>
            <person name="Clawson H."/>
            <person name="Cuff J."/>
            <person name="Di Palma F."/>
            <person name="Fitzgerald S."/>
            <person name="Flicek P."/>
            <person name="Guttman M."/>
            <person name="Hubisz M.J."/>
            <person name="Jaffe D.B."/>
            <person name="Jungreis I."/>
            <person name="Kent W.J."/>
            <person name="Kostka D."/>
            <person name="Lara M."/>
            <person name="Martins A.L."/>
            <person name="Massingham T."/>
            <person name="Moltke I."/>
            <person name="Raney B.J."/>
            <person name="Rasmussen M.D."/>
            <person name="Robinson J."/>
            <person name="Stark A."/>
            <person name="Vilella A.J."/>
            <person name="Wen J."/>
            <person name="Xie X."/>
            <person name="Zody M.C."/>
            <person name="Baldwin J."/>
            <person name="Bloom T."/>
            <person name="Chin C.W."/>
            <person name="Heiman D."/>
            <person name="Nicol R."/>
            <person name="Nusbaum C."/>
            <person name="Young S."/>
            <person name="Wilkinson J."/>
            <person name="Worley K.C."/>
            <person name="Kovar C.L."/>
            <person name="Muzny D.M."/>
            <person name="Gibbs R.A."/>
            <person name="Cree A."/>
            <person name="Dihn H.H."/>
            <person name="Fowler G."/>
            <person name="Jhangiani S."/>
            <person name="Joshi V."/>
            <person name="Lee S."/>
            <person name="Lewis L.R."/>
            <person name="Nazareth L.V."/>
            <person name="Okwuonu G."/>
            <person name="Santibanez J."/>
            <person name="Warren W.C."/>
            <person name="Mardis E.R."/>
            <person name="Weinstock G.M."/>
            <person name="Wilson R.K."/>
            <person name="Delehaunty K."/>
            <person name="Dooling D."/>
            <person name="Fronik C."/>
            <person name="Fulton L."/>
            <person name="Fulton B."/>
            <person name="Graves T."/>
            <person name="Minx P."/>
            <person name="Sodergren E."/>
            <person name="Birney E."/>
            <person name="Margulies E.H."/>
            <person name="Herrero J."/>
            <person name="Green E.D."/>
            <person name="Haussler D."/>
            <person name="Siepel A."/>
            <person name="Goldman N."/>
            <person name="Pollard K.S."/>
            <person name="Pedersen J.S."/>
            <person name="Lander E.S."/>
            <person name="Kellis M."/>
        </authorList>
    </citation>
    <scope>NUCLEOTIDE SEQUENCE [LARGE SCALE GENOMIC DNA]</scope>
</reference>
<reference key="2">
    <citation type="unpublished observations" date="2014-06">
        <authorList>
            <person name="Puppione D.L."/>
        </authorList>
    </citation>
    <scope>IDENTIFICATION</scope>
</reference>
<sequence>MLFPGCRSRALSSLCFCVLVLACVVACQQEGPGGTSSPSPEPASSSWSLVPGKMKEWMESLVTRTRESWQWFWGPRAFQGFVQTFYDDHLGDLGSHTQAWLHSSKDSLLNKAYDLCPQLLCRDSYWD</sequence>
<feature type="signal peptide" evidence="2">
    <location>
        <begin position="1"/>
        <end position="27"/>
    </location>
</feature>
<feature type="chain" id="PRO_0000429974" description="Apolipoprotein C-IV">
    <location>
        <begin position="28"/>
        <end position="127"/>
    </location>
</feature>
<comment type="function">
    <text evidence="1">May participate in lipoprotein metabolism.</text>
</comment>
<comment type="subcellular location">
    <subcellularLocation>
        <location evidence="1">Secreted</location>
    </subcellularLocation>
</comment>
<comment type="similarity">
    <text evidence="3">Belongs to the apolipoprotein C4 family.</text>
</comment>
<keyword id="KW-0445">Lipid transport</keyword>
<keyword id="KW-1185">Reference proteome</keyword>
<keyword id="KW-0964">Secreted</keyword>
<keyword id="KW-0732">Signal</keyword>
<keyword id="KW-0813">Transport</keyword>
<proteinExistence type="inferred from homology"/>
<dbReference type="EMBL" id="ABRN02374634">
    <property type="status" value="NOT_ANNOTATED_CDS"/>
    <property type="molecule type" value="Genomic_DNA"/>
</dbReference>
<dbReference type="RefSeq" id="XP_033701992.1">
    <property type="nucleotide sequence ID" value="XM_033846101.1"/>
</dbReference>
<dbReference type="FunCoup" id="P0DML6">
    <property type="interactions" value="29"/>
</dbReference>
<dbReference type="STRING" id="9739.ENSTTRP00000008254"/>
<dbReference type="GeneID" id="117309235"/>
<dbReference type="HOGENOM" id="CLU_161459_0_0_1"/>
<dbReference type="InParanoid" id="P0DML6"/>
<dbReference type="OMA" id="KWQWFWG"/>
<dbReference type="OrthoDB" id="9683933at2759"/>
<dbReference type="Proteomes" id="UP000245320">
    <property type="component" value="Chromosome 19"/>
</dbReference>
<dbReference type="GO" id="GO:0034364">
    <property type="term" value="C:high-density lipoprotein particle"/>
    <property type="evidence" value="ECO:0007669"/>
    <property type="project" value="Ensembl"/>
</dbReference>
<dbReference type="GO" id="GO:0034361">
    <property type="term" value="C:very-low-density lipoprotein particle"/>
    <property type="evidence" value="ECO:0007669"/>
    <property type="project" value="Ensembl"/>
</dbReference>
<dbReference type="GO" id="GO:0019915">
    <property type="term" value="P:lipid storage"/>
    <property type="evidence" value="ECO:0007669"/>
    <property type="project" value="Ensembl"/>
</dbReference>
<dbReference type="GO" id="GO:0006869">
    <property type="term" value="P:lipid transport"/>
    <property type="evidence" value="ECO:0007669"/>
    <property type="project" value="UniProtKB-KW"/>
</dbReference>
<dbReference type="GO" id="GO:0010890">
    <property type="term" value="P:positive regulation of triglyceride storage"/>
    <property type="evidence" value="ECO:0007669"/>
    <property type="project" value="TreeGrafter"/>
</dbReference>
<dbReference type="GO" id="GO:0070328">
    <property type="term" value="P:triglyceride homeostasis"/>
    <property type="evidence" value="ECO:0007669"/>
    <property type="project" value="Ensembl"/>
</dbReference>
<dbReference type="InterPro" id="IPR028120">
    <property type="entry name" value="APOC4"/>
</dbReference>
<dbReference type="PANTHER" id="PTHR32288">
    <property type="entry name" value="APOLIPOPROTEIN C-IV"/>
    <property type="match status" value="1"/>
</dbReference>
<dbReference type="PANTHER" id="PTHR32288:SF0">
    <property type="entry name" value="APOLIPOPROTEIN C-IV"/>
    <property type="match status" value="1"/>
</dbReference>
<dbReference type="Pfam" id="PF15119">
    <property type="entry name" value="APOC4"/>
    <property type="match status" value="1"/>
</dbReference>
<name>APOC4_TURTR</name>
<protein>
    <recommendedName>
        <fullName>Apolipoprotein C-IV</fullName>
        <shortName>Apo-CIV</shortName>
        <shortName>ApoC-IV</shortName>
    </recommendedName>
    <alternativeName>
        <fullName>Apolipoprotein C4</fullName>
    </alternativeName>
</protein>